<organism>
    <name type="scientific">Oryza sativa subsp. japonica</name>
    <name type="common">Rice</name>
    <dbReference type="NCBI Taxonomy" id="39947"/>
    <lineage>
        <taxon>Eukaryota</taxon>
        <taxon>Viridiplantae</taxon>
        <taxon>Streptophyta</taxon>
        <taxon>Embryophyta</taxon>
        <taxon>Tracheophyta</taxon>
        <taxon>Spermatophyta</taxon>
        <taxon>Magnoliopsida</taxon>
        <taxon>Liliopsida</taxon>
        <taxon>Poales</taxon>
        <taxon>Poaceae</taxon>
        <taxon>BOP clade</taxon>
        <taxon>Oryzoideae</taxon>
        <taxon>Oryzeae</taxon>
        <taxon>Oryzinae</taxon>
        <taxon>Oryza</taxon>
        <taxon>Oryza sativa</taxon>
    </lineage>
</organism>
<reference key="1">
    <citation type="journal article" date="2005" name="Genome Res.">
        <title>Sequence, annotation, and analysis of synteny between rice chromosome 3 and diverged grass species.</title>
        <authorList>
            <consortium name="The rice chromosome 3 sequencing consortium"/>
            <person name="Buell C.R."/>
            <person name="Yuan Q."/>
            <person name="Ouyang S."/>
            <person name="Liu J."/>
            <person name="Zhu W."/>
            <person name="Wang A."/>
            <person name="Maiti R."/>
            <person name="Haas B."/>
            <person name="Wortman J."/>
            <person name="Pertea M."/>
            <person name="Jones K.M."/>
            <person name="Kim M."/>
            <person name="Overton L."/>
            <person name="Tsitrin T."/>
            <person name="Fadrosh D."/>
            <person name="Bera J."/>
            <person name="Weaver B."/>
            <person name="Jin S."/>
            <person name="Johri S."/>
            <person name="Reardon M."/>
            <person name="Webb K."/>
            <person name="Hill J."/>
            <person name="Moffat K."/>
            <person name="Tallon L."/>
            <person name="Van Aken S."/>
            <person name="Lewis M."/>
            <person name="Utterback T."/>
            <person name="Feldblyum T."/>
            <person name="Zismann V."/>
            <person name="Iobst S."/>
            <person name="Hsiao J."/>
            <person name="de Vazeille A.R."/>
            <person name="Salzberg S.L."/>
            <person name="White O."/>
            <person name="Fraser C.M."/>
            <person name="Yu Y."/>
            <person name="Kim H."/>
            <person name="Rambo T."/>
            <person name="Currie J."/>
            <person name="Collura K."/>
            <person name="Kernodle-Thompson S."/>
            <person name="Wei F."/>
            <person name="Kudrna K."/>
            <person name="Ammiraju J.S.S."/>
            <person name="Luo M."/>
            <person name="Goicoechea J.L."/>
            <person name="Wing R.A."/>
            <person name="Henry D."/>
            <person name="Oates R."/>
            <person name="Palmer M."/>
            <person name="Pries G."/>
            <person name="Saski C."/>
            <person name="Simmons J."/>
            <person name="Soderlund C."/>
            <person name="Nelson W."/>
            <person name="de la Bastide M."/>
            <person name="Spiegel L."/>
            <person name="Nascimento L."/>
            <person name="Huang E."/>
            <person name="Preston R."/>
            <person name="Zutavern T."/>
            <person name="Palmer L."/>
            <person name="O'Shaughnessy A."/>
            <person name="Dike S."/>
            <person name="McCombie W.R."/>
            <person name="Minx P."/>
            <person name="Cordum H."/>
            <person name="Wilson R."/>
            <person name="Jin W."/>
            <person name="Lee H.R."/>
            <person name="Jiang J."/>
            <person name="Jackson S."/>
        </authorList>
    </citation>
    <scope>NUCLEOTIDE SEQUENCE [LARGE SCALE GENOMIC DNA]</scope>
    <source>
        <strain>cv. Nipponbare</strain>
    </source>
</reference>
<reference key="2">
    <citation type="journal article" date="2005" name="Nature">
        <title>The map-based sequence of the rice genome.</title>
        <authorList>
            <consortium name="International rice genome sequencing project (IRGSP)"/>
        </authorList>
    </citation>
    <scope>NUCLEOTIDE SEQUENCE [LARGE SCALE GENOMIC DNA]</scope>
    <source>
        <strain>cv. Nipponbare</strain>
    </source>
</reference>
<reference key="3">
    <citation type="journal article" date="2008" name="Nucleic Acids Res.">
        <title>The rice annotation project database (RAP-DB): 2008 update.</title>
        <authorList>
            <consortium name="The rice annotation project (RAP)"/>
        </authorList>
    </citation>
    <scope>GENOME REANNOTATION</scope>
    <source>
        <strain>cv. Nipponbare</strain>
    </source>
</reference>
<reference key="4">
    <citation type="journal article" date="2013" name="Rice">
        <title>Improvement of the Oryza sativa Nipponbare reference genome using next generation sequence and optical map data.</title>
        <authorList>
            <person name="Kawahara Y."/>
            <person name="de la Bastide M."/>
            <person name="Hamilton J.P."/>
            <person name="Kanamori H."/>
            <person name="McCombie W.R."/>
            <person name="Ouyang S."/>
            <person name="Schwartz D.C."/>
            <person name="Tanaka T."/>
            <person name="Wu J."/>
            <person name="Zhou S."/>
            <person name="Childs K.L."/>
            <person name="Davidson R.M."/>
            <person name="Lin H."/>
            <person name="Quesada-Ocampo L."/>
            <person name="Vaillancourt B."/>
            <person name="Sakai H."/>
            <person name="Lee S.S."/>
            <person name="Kim J."/>
            <person name="Numa H."/>
            <person name="Itoh T."/>
            <person name="Buell C.R."/>
            <person name="Matsumoto T."/>
        </authorList>
    </citation>
    <scope>GENOME REANNOTATION</scope>
    <source>
        <strain>cv. Nipponbare</strain>
    </source>
</reference>
<reference key="5">
    <citation type="journal article" date="2003" name="Science">
        <title>Collection, mapping, and annotation of over 28,000 cDNA clones from japonica rice.</title>
        <authorList>
            <consortium name="The rice full-length cDNA consortium"/>
        </authorList>
    </citation>
    <scope>NUCLEOTIDE SEQUENCE [LARGE SCALE MRNA] (ISOFORM 2)</scope>
    <source>
        <strain>cv. Nipponbare</strain>
    </source>
</reference>
<reference key="6">
    <citation type="submission" date="2007-09" db="EMBL/GenBank/DDBJ databases">
        <title>Oryza sativa full length cDNA.</title>
        <authorList>
            <consortium name="The rice full-length cDNA consortium"/>
        </authorList>
    </citation>
    <scope>NUCLEOTIDE SEQUENCE [LARGE SCALE MRNA] (ISOFORM 1)</scope>
    <source>
        <strain>cv. Nipponbare</strain>
    </source>
</reference>
<reference key="7">
    <citation type="journal article" date="2008" name="BMC Genomics">
        <title>Genome-wide analysis of CCCH zinc finger family in Arabidopsis and rice.</title>
        <authorList>
            <person name="Wang D."/>
            <person name="Guo Y."/>
            <person name="Wu C."/>
            <person name="Yang G."/>
            <person name="Li Y."/>
            <person name="Zheng C."/>
        </authorList>
    </citation>
    <scope>NOMENCLATURE</scope>
</reference>
<keyword id="KW-0025">Alternative splicing</keyword>
<keyword id="KW-0175">Coiled coil</keyword>
<keyword id="KW-0238">DNA-binding</keyword>
<keyword id="KW-0479">Metal-binding</keyword>
<keyword id="KW-1185">Reference proteome</keyword>
<keyword id="KW-0694">RNA-binding</keyword>
<keyword id="KW-0862">Zinc</keyword>
<keyword id="KW-0863">Zinc-finger</keyword>
<evidence type="ECO:0000255" key="1"/>
<evidence type="ECO:0000255" key="2">
    <source>
        <dbReference type="PROSITE-ProRule" id="PRU00176"/>
    </source>
</evidence>
<evidence type="ECO:0000255" key="3">
    <source>
        <dbReference type="PROSITE-ProRule" id="PRU00723"/>
    </source>
</evidence>
<evidence type="ECO:0000256" key="4">
    <source>
        <dbReference type="SAM" id="MobiDB-lite"/>
    </source>
</evidence>
<evidence type="ECO:0000303" key="5">
    <source>
    </source>
</evidence>
<evidence type="ECO:0000305" key="6"/>
<sequence length="688" mass="73136">MDAYEATKVVFSRIQALDPDHAAKIMGLLLIQDHGDKEMIRLAFGPEALLHSVMAQARKELALLPPPPPPSSSSPTVPAAHSPFLLSRQNSGRGPAPSPSPLSASSPSSWAQAQPFSRSNGSVDEVVGAGEELISPANSGGGAAANAPPFFPRGGDVLLDDFQLQEQLAFLNEGGVNPSHPLQGFDGAECRSPGPGEGGGMFPYGLGWANGGPGHRRSASVNELCLGGGSSDGFGWKPCLYYARGFCKNGSSCRFVHGDDAAALTGAAMDAATAEQQQCQDFLLRSKSQRLGPAAFPYSPTGSLPGSPSAATKCLSLLLQQQHNDNQRAAAAAALMLGGSDEAHKFMGRPRLDRVDFASMMNPGSRQIYLTFPADSTFREEDVSNYFSIYGPVHDVRIPYQQKRMFGFVTFVYPETVKLILAKGNPHFICDARVLVKPYKEKGKVPDKYRKHQGDFSGCTTPTGLDGRDPFDLHQLGARMLQHSNSTNEMMLRRKLEEQQQAAELQQAIELHSRRLMDLQLLDLKNRAAAAVTTAMAMTIPTANAFGSSQPLATTMVESPPDSGEQLKGTGYFTEERKMVNGGGDKEESAGEASLNADSDQSLEHNLPDSPFASPTKSSVSAHQSFTTTDTGVVATSSCSASHVGISAGTNAGGGINHLRPSTLDIPSPRDFFSVSSRLASDHGAIGM</sequence>
<accession>Q10M00</accession>
<accession>A0A0P0VX38</accession>
<accession>Q10M01</accession>
<proteinExistence type="evidence at transcript level"/>
<feature type="chain" id="PRO_0000346818" description="Zinc finger CCCH domain-containing protein 22">
    <location>
        <begin position="1"/>
        <end position="688"/>
    </location>
</feature>
<feature type="domain" description="RRM" evidence="2">
    <location>
        <begin position="366"/>
        <end position="442"/>
    </location>
</feature>
<feature type="zinc finger region" description="C3H1-type" evidence="3">
    <location>
        <begin position="233"/>
        <end position="260"/>
    </location>
</feature>
<feature type="region of interest" description="Disordered" evidence="4">
    <location>
        <begin position="62"/>
        <end position="123"/>
    </location>
</feature>
<feature type="region of interest" description="Disordered" evidence="4">
    <location>
        <begin position="552"/>
        <end position="624"/>
    </location>
</feature>
<feature type="coiled-coil region" evidence="1">
    <location>
        <begin position="487"/>
        <end position="522"/>
    </location>
</feature>
<feature type="compositionally biased region" description="Low complexity" evidence="4">
    <location>
        <begin position="101"/>
        <end position="117"/>
    </location>
</feature>
<feature type="compositionally biased region" description="Basic and acidic residues" evidence="4">
    <location>
        <begin position="574"/>
        <end position="589"/>
    </location>
</feature>
<feature type="compositionally biased region" description="Polar residues" evidence="4">
    <location>
        <begin position="613"/>
        <end position="624"/>
    </location>
</feature>
<feature type="splice variant" id="VSP_035019" description="In isoform 2." evidence="5">
    <location>
        <position position="677"/>
    </location>
</feature>
<name>C3H22_ORYSJ</name>
<dbReference type="EMBL" id="DP000009">
    <property type="protein sequence ID" value="ABF95737.1"/>
    <property type="molecule type" value="Genomic_DNA"/>
</dbReference>
<dbReference type="EMBL" id="DP000009">
    <property type="protein sequence ID" value="ABF95738.1"/>
    <property type="molecule type" value="Genomic_DNA"/>
</dbReference>
<dbReference type="EMBL" id="AP008209">
    <property type="protein sequence ID" value="BAF11916.1"/>
    <property type="molecule type" value="Genomic_DNA"/>
</dbReference>
<dbReference type="EMBL" id="AP014959">
    <property type="protein sequence ID" value="BAS84014.1"/>
    <property type="molecule type" value="Genomic_DNA"/>
</dbReference>
<dbReference type="EMBL" id="AP014959">
    <property type="protein sequence ID" value="BAS84015.1"/>
    <property type="molecule type" value="Genomic_DNA"/>
</dbReference>
<dbReference type="EMBL" id="AK102616">
    <property type="status" value="NOT_ANNOTATED_CDS"/>
    <property type="molecule type" value="mRNA"/>
</dbReference>
<dbReference type="EMBL" id="AK288601">
    <property type="status" value="NOT_ANNOTATED_CDS"/>
    <property type="molecule type" value="mRNA"/>
</dbReference>
<dbReference type="RefSeq" id="XP_015632783.1">
    <property type="nucleotide sequence ID" value="XM_015777297.1"/>
</dbReference>
<dbReference type="RefSeq" id="XP_015632785.1">
    <property type="nucleotide sequence ID" value="XM_015777299.1"/>
</dbReference>
<dbReference type="SMR" id="Q10M00"/>
<dbReference type="FunCoup" id="Q10M00">
    <property type="interactions" value="1550"/>
</dbReference>
<dbReference type="STRING" id="39947.Q10M00"/>
<dbReference type="PaxDb" id="39947-Q10M00"/>
<dbReference type="EnsemblPlants" id="Os03t0328900-01">
    <molecule id="Q10M00-1"/>
    <property type="protein sequence ID" value="Os03t0328900-01"/>
    <property type="gene ID" value="Os03g0328900"/>
</dbReference>
<dbReference type="Gramene" id="Os03t0328900-01">
    <molecule id="Q10M00-1"/>
    <property type="protein sequence ID" value="Os03t0328900-01"/>
    <property type="gene ID" value="Os03g0328900"/>
</dbReference>
<dbReference type="KEGG" id="dosa:Os03g0328900"/>
<dbReference type="eggNOG" id="ENOG502QWIK">
    <property type="taxonomic scope" value="Eukaryota"/>
</dbReference>
<dbReference type="InParanoid" id="Q10M00"/>
<dbReference type="OMA" id="GGMFPYG"/>
<dbReference type="OrthoDB" id="1897736at2759"/>
<dbReference type="Proteomes" id="UP000000763">
    <property type="component" value="Chromosome 3"/>
</dbReference>
<dbReference type="Proteomes" id="UP000059680">
    <property type="component" value="Chromosome 3"/>
</dbReference>
<dbReference type="ExpressionAtlas" id="Q10M00">
    <property type="expression patterns" value="baseline and differential"/>
</dbReference>
<dbReference type="GO" id="GO:0003677">
    <property type="term" value="F:DNA binding"/>
    <property type="evidence" value="ECO:0007669"/>
    <property type="project" value="UniProtKB-KW"/>
</dbReference>
<dbReference type="GO" id="GO:0003723">
    <property type="term" value="F:RNA binding"/>
    <property type="evidence" value="ECO:0007669"/>
    <property type="project" value="UniProtKB-KW"/>
</dbReference>
<dbReference type="GO" id="GO:0008270">
    <property type="term" value="F:zinc ion binding"/>
    <property type="evidence" value="ECO:0007669"/>
    <property type="project" value="UniProtKB-KW"/>
</dbReference>
<dbReference type="CDD" id="cd12458">
    <property type="entry name" value="RRM_AtC3H46_like"/>
    <property type="match status" value="1"/>
</dbReference>
<dbReference type="FunFam" id="3.30.70.330:FF:000678">
    <property type="entry name" value="zinc finger CCCH domain-containing protein 53-like isoform X2"/>
    <property type="match status" value="1"/>
</dbReference>
<dbReference type="Gene3D" id="3.30.70.330">
    <property type="match status" value="1"/>
</dbReference>
<dbReference type="Gene3D" id="4.10.1000.10">
    <property type="entry name" value="Zinc finger, CCCH-type"/>
    <property type="match status" value="1"/>
</dbReference>
<dbReference type="InterPro" id="IPR056276">
    <property type="entry name" value="AtC3H46-like_PABC-like"/>
</dbReference>
<dbReference type="InterPro" id="IPR034365">
    <property type="entry name" value="AtC3H46-like_RRM"/>
</dbReference>
<dbReference type="InterPro" id="IPR012677">
    <property type="entry name" value="Nucleotide-bd_a/b_plait_sf"/>
</dbReference>
<dbReference type="InterPro" id="IPR035979">
    <property type="entry name" value="RBD_domain_sf"/>
</dbReference>
<dbReference type="InterPro" id="IPR000504">
    <property type="entry name" value="RRM_dom"/>
</dbReference>
<dbReference type="InterPro" id="IPR000571">
    <property type="entry name" value="Znf_CCCH"/>
</dbReference>
<dbReference type="InterPro" id="IPR036855">
    <property type="entry name" value="Znf_CCCH_sf"/>
</dbReference>
<dbReference type="PANTHER" id="PTHR24009">
    <property type="entry name" value="RNA-BINDING (RRM/RBD/RNP MOTIFS)"/>
    <property type="match status" value="1"/>
</dbReference>
<dbReference type="PANTHER" id="PTHR24009:SF47">
    <property type="entry name" value="ZINC FINGER CCCH DOMAIN-CONTAINING PROTEIN 22"/>
    <property type="match status" value="1"/>
</dbReference>
<dbReference type="Pfam" id="PF23182">
    <property type="entry name" value="PABC_AtC3H46"/>
    <property type="match status" value="1"/>
</dbReference>
<dbReference type="Pfam" id="PF00076">
    <property type="entry name" value="RRM_1"/>
    <property type="match status" value="1"/>
</dbReference>
<dbReference type="Pfam" id="PF00642">
    <property type="entry name" value="zf-CCCH"/>
    <property type="match status" value="1"/>
</dbReference>
<dbReference type="SMART" id="SM00360">
    <property type="entry name" value="RRM"/>
    <property type="match status" value="1"/>
</dbReference>
<dbReference type="SMART" id="SM00356">
    <property type="entry name" value="ZnF_C3H1"/>
    <property type="match status" value="1"/>
</dbReference>
<dbReference type="SUPFAM" id="SSF90229">
    <property type="entry name" value="CCCH zinc finger"/>
    <property type="match status" value="1"/>
</dbReference>
<dbReference type="SUPFAM" id="SSF54928">
    <property type="entry name" value="RNA-binding domain, RBD"/>
    <property type="match status" value="1"/>
</dbReference>
<dbReference type="PROSITE" id="PS50102">
    <property type="entry name" value="RRM"/>
    <property type="match status" value="1"/>
</dbReference>
<dbReference type="PROSITE" id="PS50103">
    <property type="entry name" value="ZF_C3H1"/>
    <property type="match status" value="1"/>
</dbReference>
<comment type="alternative products">
    <event type="alternative splicing"/>
    <isoform>
        <id>Q10M00-1</id>
        <name>1</name>
        <sequence type="displayed"/>
    </isoform>
    <isoform>
        <id>Q10M00-2</id>
        <name>2</name>
        <sequence type="described" ref="VSP_035019"/>
    </isoform>
</comment>
<comment type="miscellaneous">
    <molecule>Isoform 2</molecule>
    <text evidence="6">May be due to a competing acceptor splice site.</text>
</comment>
<gene>
    <name type="ordered locus">Os03g0328900</name>
    <name type="ordered locus">LOC_Os03g21140</name>
</gene>
<protein>
    <recommendedName>
        <fullName>Zinc finger CCCH domain-containing protein 22</fullName>
        <shortName>OsC3H22</shortName>
    </recommendedName>
</protein>